<reference key="1">
    <citation type="journal article" date="2001" name="Proc. Natl. Acad. Sci. U.S.A.">
        <title>Complete genomic sequence of Pasteurella multocida Pm70.</title>
        <authorList>
            <person name="May B.J."/>
            <person name="Zhang Q."/>
            <person name="Li L.L."/>
            <person name="Paustian M.L."/>
            <person name="Whittam T.S."/>
            <person name="Kapur V."/>
        </authorList>
    </citation>
    <scope>NUCLEOTIDE SEQUENCE [LARGE SCALE GENOMIC DNA]</scope>
    <source>
        <strain>Pm70</strain>
    </source>
</reference>
<accession>P57802</accession>
<gene>
    <name evidence="1" type="primary">greB</name>
    <name type="ordered locus">PM1450</name>
</gene>
<protein>
    <recommendedName>
        <fullName evidence="1">Transcription elongation factor GreB</fullName>
    </recommendedName>
    <alternativeName>
        <fullName evidence="1">Transcript cleavage factor GreB</fullName>
    </alternativeName>
</protein>
<dbReference type="EMBL" id="AE004439">
    <property type="protein sequence ID" value="AAK03534.1"/>
    <property type="molecule type" value="Genomic_DNA"/>
</dbReference>
<dbReference type="RefSeq" id="WP_005724117.1">
    <property type="nucleotide sequence ID" value="NC_002663.1"/>
</dbReference>
<dbReference type="SMR" id="P57802"/>
<dbReference type="STRING" id="272843.PM1450"/>
<dbReference type="EnsemblBacteria" id="AAK03534">
    <property type="protein sequence ID" value="AAK03534"/>
    <property type="gene ID" value="PM1450"/>
</dbReference>
<dbReference type="GeneID" id="77206991"/>
<dbReference type="KEGG" id="pmu:PM1450"/>
<dbReference type="HOGENOM" id="CLU_101379_3_0_6"/>
<dbReference type="OrthoDB" id="5511940at2"/>
<dbReference type="Proteomes" id="UP000000809">
    <property type="component" value="Chromosome"/>
</dbReference>
<dbReference type="GO" id="GO:0003677">
    <property type="term" value="F:DNA binding"/>
    <property type="evidence" value="ECO:0007669"/>
    <property type="project" value="UniProtKB-UniRule"/>
</dbReference>
<dbReference type="GO" id="GO:0070063">
    <property type="term" value="F:RNA polymerase binding"/>
    <property type="evidence" value="ECO:0007669"/>
    <property type="project" value="InterPro"/>
</dbReference>
<dbReference type="GO" id="GO:0006354">
    <property type="term" value="P:DNA-templated transcription elongation"/>
    <property type="evidence" value="ECO:0007669"/>
    <property type="project" value="TreeGrafter"/>
</dbReference>
<dbReference type="GO" id="GO:0032784">
    <property type="term" value="P:regulation of DNA-templated transcription elongation"/>
    <property type="evidence" value="ECO:0007669"/>
    <property type="project" value="UniProtKB-UniRule"/>
</dbReference>
<dbReference type="FunFam" id="1.10.287.180:FF:000001">
    <property type="entry name" value="Transcription elongation factor GreA"/>
    <property type="match status" value="1"/>
</dbReference>
<dbReference type="FunFam" id="3.10.50.30:FF:000001">
    <property type="entry name" value="Transcription elongation factor GreA"/>
    <property type="match status" value="1"/>
</dbReference>
<dbReference type="Gene3D" id="3.10.50.30">
    <property type="entry name" value="Transcription elongation factor, GreA/GreB, C-terminal domain"/>
    <property type="match status" value="1"/>
</dbReference>
<dbReference type="Gene3D" id="1.10.287.180">
    <property type="entry name" value="Transcription elongation factor, GreA/GreB, N-terminal domain"/>
    <property type="match status" value="1"/>
</dbReference>
<dbReference type="HAMAP" id="MF_00105">
    <property type="entry name" value="GreA_GreB"/>
    <property type="match status" value="1"/>
</dbReference>
<dbReference type="HAMAP" id="MF_00930">
    <property type="entry name" value="GreB"/>
    <property type="match status" value="1"/>
</dbReference>
<dbReference type="InterPro" id="IPR036953">
    <property type="entry name" value="GreA/GreB_C_sf"/>
</dbReference>
<dbReference type="InterPro" id="IPR018151">
    <property type="entry name" value="TF_GreA/GreB_CS"/>
</dbReference>
<dbReference type="InterPro" id="IPR028624">
    <property type="entry name" value="Tscrpt_elong_fac_GreA/B"/>
</dbReference>
<dbReference type="InterPro" id="IPR001437">
    <property type="entry name" value="Tscrpt_elong_fac_GreA/B_C"/>
</dbReference>
<dbReference type="InterPro" id="IPR023459">
    <property type="entry name" value="Tscrpt_elong_fac_GreA/B_fam"/>
</dbReference>
<dbReference type="InterPro" id="IPR022691">
    <property type="entry name" value="Tscrpt_elong_fac_GreA/B_N"/>
</dbReference>
<dbReference type="InterPro" id="IPR036805">
    <property type="entry name" value="Tscrpt_elong_fac_GreA/B_N_sf"/>
</dbReference>
<dbReference type="InterPro" id="IPR006358">
    <property type="entry name" value="Tscrpt_elong_fac_GreB"/>
</dbReference>
<dbReference type="NCBIfam" id="TIGR01461">
    <property type="entry name" value="greB"/>
    <property type="match status" value="1"/>
</dbReference>
<dbReference type="NCBIfam" id="NF002506">
    <property type="entry name" value="PRK01885.1"/>
    <property type="match status" value="1"/>
</dbReference>
<dbReference type="PANTHER" id="PTHR30437">
    <property type="entry name" value="TRANSCRIPTION ELONGATION FACTOR GREA"/>
    <property type="match status" value="1"/>
</dbReference>
<dbReference type="PANTHER" id="PTHR30437:SF6">
    <property type="entry name" value="TRANSCRIPTION ELONGATION FACTOR GREB"/>
    <property type="match status" value="1"/>
</dbReference>
<dbReference type="Pfam" id="PF01272">
    <property type="entry name" value="GreA_GreB"/>
    <property type="match status" value="1"/>
</dbReference>
<dbReference type="Pfam" id="PF03449">
    <property type="entry name" value="GreA_GreB_N"/>
    <property type="match status" value="1"/>
</dbReference>
<dbReference type="PIRSF" id="PIRSF006092">
    <property type="entry name" value="GreA_GreB"/>
    <property type="match status" value="1"/>
</dbReference>
<dbReference type="SUPFAM" id="SSF54534">
    <property type="entry name" value="FKBP-like"/>
    <property type="match status" value="1"/>
</dbReference>
<dbReference type="SUPFAM" id="SSF46557">
    <property type="entry name" value="GreA transcript cleavage protein, N-terminal domain"/>
    <property type="match status" value="1"/>
</dbReference>
<dbReference type="PROSITE" id="PS00829">
    <property type="entry name" value="GREAB_1"/>
    <property type="match status" value="1"/>
</dbReference>
<dbReference type="PROSITE" id="PS00830">
    <property type="entry name" value="GREAB_2"/>
    <property type="match status" value="1"/>
</dbReference>
<proteinExistence type="inferred from homology"/>
<keyword id="KW-0175">Coiled coil</keyword>
<keyword id="KW-0238">DNA-binding</keyword>
<keyword id="KW-1185">Reference proteome</keyword>
<keyword id="KW-0804">Transcription</keyword>
<keyword id="KW-0805">Transcription regulation</keyword>
<feature type="chain" id="PRO_0000176951" description="Transcription elongation factor GreB">
    <location>
        <begin position="1"/>
        <end position="158"/>
    </location>
</feature>
<feature type="coiled-coil region" evidence="1">
    <location>
        <begin position="53"/>
        <end position="75"/>
    </location>
</feature>
<name>GREB_PASMU</name>
<evidence type="ECO:0000255" key="1">
    <source>
        <dbReference type="HAMAP-Rule" id="MF_00930"/>
    </source>
</evidence>
<sequence>MAKSNYITRSGWNALDQELKFLWKDERPKVTQAVSDAAALGDRSENAEYIYGKRRLREIDRRVRFLTKRLEVLQIVDYHPKQEGKVFFGAWVALENEAGEEKHYRIVGCDEFDPAKNWISIDSPVARALIGKSIDDEIKVETPSGLVILYINQIWYEK</sequence>
<comment type="function">
    <text evidence="1">Necessary for efficient RNA polymerase transcription elongation past template-encoded arresting sites. The arresting sites in DNA have the property of trapping a certain fraction of elongating RNA polymerases that pass through, resulting in locked ternary complexes. Cleavage of the nascent transcript by cleavage factors such as GreA or GreB allows the resumption of elongation from the new 3'terminus. GreB releases sequences of up to 9 nucleotides in length.</text>
</comment>
<comment type="similarity">
    <text evidence="1">Belongs to the GreA/GreB family. GreB subfamily.</text>
</comment>
<organism>
    <name type="scientific">Pasteurella multocida (strain Pm70)</name>
    <dbReference type="NCBI Taxonomy" id="272843"/>
    <lineage>
        <taxon>Bacteria</taxon>
        <taxon>Pseudomonadati</taxon>
        <taxon>Pseudomonadota</taxon>
        <taxon>Gammaproteobacteria</taxon>
        <taxon>Pasteurellales</taxon>
        <taxon>Pasteurellaceae</taxon>
        <taxon>Pasteurella</taxon>
    </lineage>
</organism>